<feature type="chain" id="PRO_0000307203" description="DNA damage-inducible transcript 4-like protein">
    <location>
        <begin position="1"/>
        <end position="193"/>
    </location>
</feature>
<proteinExistence type="evidence at transcript level"/>
<keyword id="KW-0963">Cytoplasm</keyword>
<keyword id="KW-1185">Reference proteome</keyword>
<name>DDT4L_BOVIN</name>
<evidence type="ECO:0000250" key="1"/>
<evidence type="ECO:0000305" key="2"/>
<accession>A2VDT9</accession>
<dbReference type="EMBL" id="BC133398">
    <property type="protein sequence ID" value="AAI33399.1"/>
    <property type="molecule type" value="mRNA"/>
</dbReference>
<dbReference type="RefSeq" id="NP_001074988.1">
    <property type="nucleotide sequence ID" value="NM_001081519.1"/>
</dbReference>
<dbReference type="SMR" id="A2VDT9"/>
<dbReference type="FunCoup" id="A2VDT9">
    <property type="interactions" value="53"/>
</dbReference>
<dbReference type="STRING" id="9913.ENSBTAP00000014026"/>
<dbReference type="PaxDb" id="9913-ENSBTAP00000014026"/>
<dbReference type="Ensembl" id="ENSBTAT00000014026.5">
    <property type="protein sequence ID" value="ENSBTAP00000014026.4"/>
    <property type="gene ID" value="ENSBTAG00000010610.5"/>
</dbReference>
<dbReference type="GeneID" id="510906"/>
<dbReference type="KEGG" id="bta:510906"/>
<dbReference type="CTD" id="115265"/>
<dbReference type="VEuPathDB" id="HostDB:ENSBTAG00000010610"/>
<dbReference type="VGNC" id="VGNC:27949">
    <property type="gene designation" value="DDIT4L"/>
</dbReference>
<dbReference type="eggNOG" id="ENOG502R3EE">
    <property type="taxonomic scope" value="Eukaryota"/>
</dbReference>
<dbReference type="GeneTree" id="ENSGT00530000063652"/>
<dbReference type="HOGENOM" id="CLU_086145_0_0_1"/>
<dbReference type="InParanoid" id="A2VDT9"/>
<dbReference type="OMA" id="VFKQDNC"/>
<dbReference type="OrthoDB" id="10018535at2759"/>
<dbReference type="TreeFam" id="TF105007"/>
<dbReference type="Proteomes" id="UP000009136">
    <property type="component" value="Chromosome 6"/>
</dbReference>
<dbReference type="Bgee" id="ENSBTAG00000010610">
    <property type="expression patterns" value="Expressed in biceps femoris and 95 other cell types or tissues"/>
</dbReference>
<dbReference type="GO" id="GO:0005737">
    <property type="term" value="C:cytoplasm"/>
    <property type="evidence" value="ECO:0000250"/>
    <property type="project" value="UniProtKB"/>
</dbReference>
<dbReference type="GO" id="GO:0009968">
    <property type="term" value="P:negative regulation of signal transduction"/>
    <property type="evidence" value="ECO:0007669"/>
    <property type="project" value="InterPro"/>
</dbReference>
<dbReference type="FunFam" id="3.90.470.40:FF:000002">
    <property type="entry name" value="DNA damage-inducible transcript 4-like protein"/>
    <property type="match status" value="1"/>
</dbReference>
<dbReference type="Gene3D" id="3.90.470.40">
    <property type="entry name" value="RTP801-like"/>
    <property type="match status" value="1"/>
</dbReference>
<dbReference type="InterPro" id="IPR012918">
    <property type="entry name" value="RTP801-like"/>
</dbReference>
<dbReference type="InterPro" id="IPR038281">
    <property type="entry name" value="RTP801-like_C_sf"/>
</dbReference>
<dbReference type="PANTHER" id="PTHR12478:SF17">
    <property type="entry name" value="DNA DAMAGE-INDUCIBLE TRANSCRIPT 4-LIKE PROTEIN"/>
    <property type="match status" value="1"/>
</dbReference>
<dbReference type="PANTHER" id="PTHR12478">
    <property type="entry name" value="DNA-DAMAGE-INDUCIBLE TRANSCRIPT 4 PROTEIN DDIT4"/>
    <property type="match status" value="1"/>
</dbReference>
<dbReference type="Pfam" id="PF07809">
    <property type="entry name" value="RTP801_C"/>
    <property type="match status" value="1"/>
</dbReference>
<gene>
    <name type="primary">DDIT4L</name>
</gene>
<protein>
    <recommendedName>
        <fullName>DNA damage-inducible transcript 4-like protein</fullName>
    </recommendedName>
</protein>
<organism>
    <name type="scientific">Bos taurus</name>
    <name type="common">Bovine</name>
    <dbReference type="NCBI Taxonomy" id="9913"/>
    <lineage>
        <taxon>Eukaryota</taxon>
        <taxon>Metazoa</taxon>
        <taxon>Chordata</taxon>
        <taxon>Craniata</taxon>
        <taxon>Vertebrata</taxon>
        <taxon>Euteleostomi</taxon>
        <taxon>Mammalia</taxon>
        <taxon>Eutheria</taxon>
        <taxon>Laurasiatheria</taxon>
        <taxon>Artiodactyla</taxon>
        <taxon>Ruminantia</taxon>
        <taxon>Pecora</taxon>
        <taxon>Bovidae</taxon>
        <taxon>Bovinae</taxon>
        <taxon>Bos</taxon>
    </lineage>
</organism>
<comment type="function">
    <text evidence="1">Inhibits cell growth by regulating the TOR signaling pathway upstream of the TSC1-TSC2 complex and downstream of AKT1.</text>
</comment>
<comment type="subcellular location">
    <subcellularLocation>
        <location evidence="1">Cytoplasm</location>
    </subcellularLocation>
</comment>
<comment type="similarity">
    <text evidence="2">Belongs to the DDIT4 family.</text>
</comment>
<sequence>MVATGSLSSKNPASISELLDHGFYPGSLLNDFDYWDYVVPEPNLNEVVFEETTCQSLVKMLENCLSKSKHTKLGCSRVLVPEKLTQRIAQDVLRLSSTEPCGLRGCVMHVNLEIENVCKKLDRIVCDSSVVPTFELTLVFKQENCSWTSFRDFFFSRGRFSSGLRRTLILSSGFRLVKKKLYSLIGTTVIEEC</sequence>
<reference key="1">
    <citation type="submission" date="2007-02" db="EMBL/GenBank/DDBJ databases">
        <authorList>
            <consortium name="NIH - Mammalian Gene Collection (MGC) project"/>
        </authorList>
    </citation>
    <scope>NUCLEOTIDE SEQUENCE [LARGE SCALE MRNA]</scope>
    <source>
        <strain>Hereford</strain>
        <tissue>Fetal muscle</tissue>
    </source>
</reference>